<organismHost>
    <name type="scientific">Mammalia</name>
    <dbReference type="NCBI Taxonomy" id="40674"/>
</organismHost>
<evidence type="ECO:0000255" key="1">
    <source>
        <dbReference type="PROSITE-ProRule" id="PRU00551"/>
    </source>
</evidence>
<evidence type="ECO:0000255" key="2">
    <source>
        <dbReference type="PROSITE-ProRule" id="PRU01366"/>
    </source>
</evidence>
<evidence type="ECO:0000256" key="3">
    <source>
        <dbReference type="SAM" id="MobiDB-lite"/>
    </source>
</evidence>
<evidence type="ECO:0000269" key="4">
    <source>
    </source>
</evidence>
<evidence type="ECO:0000269" key="5">
    <source>
    </source>
</evidence>
<evidence type="ECO:0000269" key="6">
    <source>
    </source>
</evidence>
<evidence type="ECO:0000269" key="7">
    <source>
    </source>
</evidence>
<evidence type="ECO:0000305" key="8"/>
<evidence type="ECO:0007829" key="9">
    <source>
        <dbReference type="PDB" id="1S9H"/>
    </source>
</evidence>
<evidence type="ECO:0007829" key="10">
    <source>
        <dbReference type="PDB" id="1U0J"/>
    </source>
</evidence>
<evidence type="ECO:0007829" key="11">
    <source>
        <dbReference type="PDB" id="4ZO0"/>
    </source>
</evidence>
<evidence type="ECO:0007829" key="12">
    <source>
        <dbReference type="PDB" id="4ZQ9"/>
    </source>
</evidence>
<organism>
    <name type="scientific">Adeno-associated virus 2 (isolate Srivastava/1982)</name>
    <name type="common">AAV-2</name>
    <dbReference type="NCBI Taxonomy" id="648242"/>
    <lineage>
        <taxon>Viruses</taxon>
        <taxon>Monodnaviria</taxon>
        <taxon>Shotokuvirae</taxon>
        <taxon>Cossaviricota</taxon>
        <taxon>Quintoviricetes</taxon>
        <taxon>Piccovirales</taxon>
        <taxon>Parvoviridae</taxon>
        <taxon>Parvovirinae</taxon>
        <taxon>Dependoparvovirus</taxon>
        <taxon>Dependoparvovirus primate1</taxon>
    </lineage>
</organism>
<accession>P03132</accession>
<accession>O56650</accession>
<dbReference type="EC" id="3.6.4.12"/>
<dbReference type="EMBL" id="J01901">
    <property type="protein sequence ID" value="AAA42372.1"/>
    <property type="molecule type" value="Genomic_DNA"/>
</dbReference>
<dbReference type="EMBL" id="AF043303">
    <property type="protein sequence ID" value="AAC03774.1"/>
    <property type="molecule type" value="Genomic_DNA"/>
</dbReference>
<dbReference type="PIR" id="A03694">
    <property type="entry name" value="UYAD1A"/>
</dbReference>
<dbReference type="RefSeq" id="YP_680422.1">
    <property type="nucleotide sequence ID" value="NC_001401.2"/>
</dbReference>
<dbReference type="PDB" id="1S9H">
    <property type="method" value="X-ray"/>
    <property type="resolution" value="2.40 A"/>
    <property type="chains" value="A/B/C=225-490"/>
</dbReference>
<dbReference type="PDB" id="1U0J">
    <property type="method" value="X-ray"/>
    <property type="resolution" value="2.10 A"/>
    <property type="chains" value="A=225-490"/>
</dbReference>
<dbReference type="PDB" id="4ZO0">
    <property type="method" value="X-ray"/>
    <property type="resolution" value="2.30 A"/>
    <property type="chains" value="A/B/C=1-206"/>
</dbReference>
<dbReference type="PDB" id="4ZQ9">
    <property type="method" value="X-ray"/>
    <property type="resolution" value="2.60 A"/>
    <property type="chains" value="A/B/C=1-208"/>
</dbReference>
<dbReference type="PDB" id="5DCX">
    <property type="method" value="X-ray"/>
    <property type="resolution" value="2.60 A"/>
    <property type="chains" value="A/B/C/D/E/F/G/H/I/J/K=1-224"/>
</dbReference>
<dbReference type="PDB" id="6XB8">
    <property type="method" value="X-ray"/>
    <property type="resolution" value="3.30 A"/>
    <property type="chains" value="A/B/C/D=1-206"/>
</dbReference>
<dbReference type="PDB" id="7JSE">
    <property type="method" value="EM"/>
    <property type="resolution" value="4.60 A"/>
    <property type="chains" value="A/B/C/D/E/F/G/H/I/J/K/L/M/N/O/P=1-536"/>
</dbReference>
<dbReference type="PDB" id="7JSF">
    <property type="method" value="EM"/>
    <property type="resolution" value="6.70 A"/>
    <property type="chains" value="A/B/C/D/E/F/G=2-536"/>
</dbReference>
<dbReference type="PDB" id="7JSG">
    <property type="method" value="EM"/>
    <property type="resolution" value="5.20 A"/>
    <property type="chains" value="A/B/C/D/E/F/G=2-536"/>
</dbReference>
<dbReference type="PDB" id="7JSH">
    <property type="method" value="EM"/>
    <property type="resolution" value="4.40 A"/>
    <property type="chains" value="A/B/C/D/E/F/G=2-536"/>
</dbReference>
<dbReference type="PDB" id="7JSI">
    <property type="method" value="EM"/>
    <property type="resolution" value="5.01 A"/>
    <property type="chains" value="A/B/C/D/E/F=1-536"/>
</dbReference>
<dbReference type="PDB" id="9BC5">
    <property type="method" value="EM"/>
    <property type="resolution" value="5.32 A"/>
    <property type="chains" value="A/B/C/D/E/F/G=2-490"/>
</dbReference>
<dbReference type="PDB" id="9BU7">
    <property type="method" value="EM"/>
    <property type="resolution" value="3.64 A"/>
    <property type="chains" value="A/B/C/D/E/F/G=2-490"/>
</dbReference>
<dbReference type="PDBsum" id="1S9H"/>
<dbReference type="PDBsum" id="1U0J"/>
<dbReference type="PDBsum" id="4ZO0"/>
<dbReference type="PDBsum" id="4ZQ9"/>
<dbReference type="PDBsum" id="5DCX"/>
<dbReference type="PDBsum" id="6XB8"/>
<dbReference type="PDBsum" id="7JSE"/>
<dbReference type="PDBsum" id="7JSF"/>
<dbReference type="PDBsum" id="7JSG"/>
<dbReference type="PDBsum" id="7JSH"/>
<dbReference type="PDBsum" id="7JSI"/>
<dbReference type="PDBsum" id="9BC5"/>
<dbReference type="PDBsum" id="9BU7"/>
<dbReference type="EMDB" id="EMD-22451"/>
<dbReference type="EMDB" id="EMD-22452"/>
<dbReference type="EMDB" id="EMD-22453"/>
<dbReference type="EMDB" id="EMD-22454"/>
<dbReference type="EMDB" id="EMD-22455"/>
<dbReference type="EMDB" id="EMD-44424"/>
<dbReference type="EMDB" id="EMD-44902"/>
<dbReference type="SMR" id="P03132"/>
<dbReference type="IntAct" id="P03132">
    <property type="interactions" value="4"/>
</dbReference>
<dbReference type="MINT" id="P03132"/>
<dbReference type="DNASU" id="4192013"/>
<dbReference type="KEGG" id="vg:4192013"/>
<dbReference type="EvolutionaryTrace" id="P03132"/>
<dbReference type="Proteomes" id="UP000008469">
    <property type="component" value="Genome"/>
</dbReference>
<dbReference type="Proteomes" id="UP000180764">
    <property type="component" value="Segment"/>
</dbReference>
<dbReference type="GO" id="GO:0042025">
    <property type="term" value="C:host cell nucleus"/>
    <property type="evidence" value="ECO:0007669"/>
    <property type="project" value="UniProtKB-SubCell"/>
</dbReference>
<dbReference type="GO" id="GO:0005524">
    <property type="term" value="F:ATP binding"/>
    <property type="evidence" value="ECO:0007669"/>
    <property type="project" value="UniProtKB-KW"/>
</dbReference>
<dbReference type="GO" id="GO:0016887">
    <property type="term" value="F:ATP hydrolysis activity"/>
    <property type="evidence" value="ECO:0007669"/>
    <property type="project" value="RHEA"/>
</dbReference>
<dbReference type="GO" id="GO:0003677">
    <property type="term" value="F:DNA binding"/>
    <property type="evidence" value="ECO:0007669"/>
    <property type="project" value="UniProtKB-KW"/>
</dbReference>
<dbReference type="GO" id="GO:0004519">
    <property type="term" value="F:endonuclease activity"/>
    <property type="evidence" value="ECO:0007669"/>
    <property type="project" value="UniProtKB-KW"/>
</dbReference>
<dbReference type="GO" id="GO:0046872">
    <property type="term" value="F:metal ion binding"/>
    <property type="evidence" value="ECO:0007669"/>
    <property type="project" value="UniProtKB-KW"/>
</dbReference>
<dbReference type="GO" id="GO:0006260">
    <property type="term" value="P:DNA replication"/>
    <property type="evidence" value="ECO:0007669"/>
    <property type="project" value="UniProtKB-KW"/>
</dbReference>
<dbReference type="GO" id="GO:0140267">
    <property type="term" value="P:symbiont entry into host cell via permeabilization of host membrane"/>
    <property type="evidence" value="ECO:0007669"/>
    <property type="project" value="UniProtKB-KW"/>
</dbReference>
<dbReference type="GO" id="GO:0039592">
    <property type="term" value="P:symbiont-mediated arrest of host cell cycle during G2/M transition"/>
    <property type="evidence" value="ECO:0007669"/>
    <property type="project" value="UniProtKB-KW"/>
</dbReference>
<dbReference type="GO" id="GO:0039645">
    <property type="term" value="P:symbiont-mediated perturbation of host cell cycle G1/S transition checkpoint"/>
    <property type="evidence" value="ECO:0007669"/>
    <property type="project" value="UniProtKB-KW"/>
</dbReference>
<dbReference type="GO" id="GO:0039693">
    <property type="term" value="P:viral DNA genome replication"/>
    <property type="evidence" value="ECO:0000314"/>
    <property type="project" value="UniProtKB"/>
</dbReference>
<dbReference type="FunFam" id="3.40.1310.20:FF:000007">
    <property type="entry name" value="Protein Rep68"/>
    <property type="match status" value="1"/>
</dbReference>
<dbReference type="FunFam" id="3.40.50.300:FF:003161">
    <property type="entry name" value="Protein Rep68"/>
    <property type="match status" value="1"/>
</dbReference>
<dbReference type="Gene3D" id="1.10.10.950">
    <property type="match status" value="1"/>
</dbReference>
<dbReference type="Gene3D" id="3.40.1310.20">
    <property type="match status" value="1"/>
</dbReference>
<dbReference type="Gene3D" id="3.40.50.300">
    <property type="entry name" value="P-loop containing nucleotide triphosphate hydrolases"/>
    <property type="match status" value="1"/>
</dbReference>
<dbReference type="InterPro" id="IPR014015">
    <property type="entry name" value="Helicase_SF3_DNA-vir"/>
</dbReference>
<dbReference type="InterPro" id="IPR014835">
    <property type="entry name" value="NS1-Nuc"/>
</dbReference>
<dbReference type="InterPro" id="IPR027417">
    <property type="entry name" value="P-loop_NTPase"/>
</dbReference>
<dbReference type="InterPro" id="IPR001257">
    <property type="entry name" value="Parvovirus_NS1_helicase"/>
</dbReference>
<dbReference type="InterPro" id="IPR049901">
    <property type="entry name" value="PV_NS1-NUC"/>
</dbReference>
<dbReference type="Pfam" id="PF01057">
    <property type="entry name" value="Parvo_NS1"/>
    <property type="match status" value="1"/>
</dbReference>
<dbReference type="Pfam" id="PF08724">
    <property type="entry name" value="Rep_N"/>
    <property type="match status" value="1"/>
</dbReference>
<dbReference type="SUPFAM" id="SSF55464">
    <property type="entry name" value="Origin of replication-binding domain, RBD-like"/>
    <property type="match status" value="1"/>
</dbReference>
<dbReference type="SUPFAM" id="SSF52540">
    <property type="entry name" value="P-loop containing nucleoside triphosphate hydrolases"/>
    <property type="match status" value="1"/>
</dbReference>
<dbReference type="PROSITE" id="PS52022">
    <property type="entry name" value="PV_NS1_NUC"/>
    <property type="match status" value="1"/>
</dbReference>
<dbReference type="PROSITE" id="PS51206">
    <property type="entry name" value="SF3_HELICASE_1"/>
    <property type="match status" value="1"/>
</dbReference>
<protein>
    <recommendedName>
        <fullName>Protein Rep68</fullName>
        <ecNumber>3.6.4.12</ecNumber>
    </recommendedName>
</protein>
<reference key="1">
    <citation type="journal article" date="1983" name="J. Virol.">
        <title>Nucleotide sequence and organization of the adeno-associated virus 2 genome.</title>
        <authorList>
            <person name="Srivastava A."/>
            <person name="Lusby E.W."/>
            <person name="Berns K.I."/>
        </authorList>
    </citation>
    <scope>NUCLEOTIDE SEQUENCE [GENOMIC DNA]</scope>
</reference>
<reference key="2">
    <citation type="journal article" date="1994" name="J. Gen. Virol.">
        <title>Mutations in the carboxy terminus of adeno-associated virus 2 capsid proteins affect viral infectivity: lack of an RGD integrin-binding motif.</title>
        <authorList>
            <person name="Ruffing M."/>
            <person name="Heid H."/>
            <person name="Kleinschmidt J.A."/>
        </authorList>
    </citation>
    <scope>NUCLEOTIDE SEQUENCE [GENOMIC DNA]</scope>
</reference>
<reference key="3">
    <citation type="submission" date="1998-01" db="EMBL/GenBank/DDBJ databases">
        <authorList>
            <person name="Berns K.I."/>
            <person name="Bohenzky R.A."/>
            <person name="Cassinotti P."/>
            <person name="Colvin D."/>
            <person name="Donahue B.A."/>
            <person name="Dull T."/>
            <person name="Horer M."/>
            <person name="Kleinschmidt J.A."/>
            <person name="Ruffing M."/>
            <person name="Snyder R.O."/>
            <person name="Tratschin J.-D."/>
            <person name="Weitz M."/>
        </authorList>
    </citation>
    <scope>NUCLEOTIDE SEQUENCE [GENOMIC DNA]</scope>
</reference>
<reference key="4">
    <citation type="journal article" date="1992" name="J. Virol.">
        <title>Colocalization of adeno-associated virus Rep and capsid proteins in the nuclei of infected cells.</title>
        <authorList>
            <person name="Hunter L.A."/>
            <person name="Samulski R.J."/>
        </authorList>
    </citation>
    <scope>SUBCELLULAR LOCATION</scope>
</reference>
<reference key="5">
    <citation type="journal article" date="1999" name="J. Virol.">
        <title>Biochemical characterization of adeno-associated virus rep68 DNA helicase and ATPase activities.</title>
        <authorList>
            <person name="Zhou X."/>
            <person name="Zolotukhin I."/>
            <person name="Im D.S."/>
            <person name="Muzyczka N."/>
        </authorList>
    </citation>
    <scope>FUNCTION</scope>
</reference>
<reference key="6">
    <citation type="journal article" date="1999" name="J. Virol.">
        <title>The adeno-associated virus type 2 regulatory proteins rep78 and rep68 interact with the transcriptional coactivator PC4.</title>
        <authorList>
            <person name="Weger S."/>
            <person name="Wendland M."/>
            <person name="Kleinschmidt J.A."/>
            <person name="Heilbronn R."/>
        </authorList>
    </citation>
    <scope>INTERACTION WITH HOST SUB1/PC4</scope>
</reference>
<reference key="7">
    <citation type="journal article" date="2002" name="J. Gen. Virol.">
        <title>Topors, a p53 and topoisomerase I binding protein, interacts with the adeno-associated virus (AAV-2) Rep78/68 proteins and enhances AAV-2 gene expression.</title>
        <authorList>
            <person name="Weger S."/>
            <person name="Hammer E."/>
            <person name="Heilbronn R."/>
        </authorList>
    </citation>
    <scope>INTERACTION WITH HOST TOPORS</scope>
</reference>
<reference key="8">
    <citation type="journal article" date="2007" name="Virology">
        <title>Identification of a cytoplasmic interaction partner of the large regulatory proteins Rep78/Rep68 of adeno-associated virus type 2 (AAV-2).</title>
        <authorList>
            <person name="Weger S."/>
            <person name="Hammer E."/>
            <person name="Goetz A."/>
            <person name="Heilbronn R."/>
        </authorList>
    </citation>
    <scope>INTERACTION WITH KCTD5</scope>
</reference>
<reference key="9">
    <citation type="journal article" date="2003" name="Structure">
        <title>Crystal structure of the SF3 helicase from adeno-associated virus type 2.</title>
        <authorList>
            <person name="James J.A."/>
            <person name="Escalante C.R."/>
            <person name="Yoon-Robarts M."/>
            <person name="Edwards T.A."/>
            <person name="Linden R.M."/>
            <person name="Aggarwal A.K."/>
        </authorList>
    </citation>
    <scope>X-RAY CRYSTALLOGRAPHY (2.4 ANGSTROMS) OF 225-490</scope>
</reference>
<reference key="10">
    <citation type="journal article" date="2004" name="Proc. Natl. Acad. Sci. U.S.A.">
        <title>Structure of adeno-associated virus type 2 Rep40-ADP complex: insight into nucleotide recognition and catalysis by superfamily 3 helicases.</title>
        <authorList>
            <person name="James J.A."/>
            <person name="Aggarwal A.K."/>
            <person name="Linden R.M."/>
            <person name="Escalante C.R."/>
        </authorList>
    </citation>
    <scope>X-RAY CRYSTALLOGRAPHY (2.1 ANGSTROMS) OF 225-490</scope>
</reference>
<name>REP68_AAV2S</name>
<keyword id="KW-0002">3D-structure</keyword>
<keyword id="KW-0067">ATP-binding</keyword>
<keyword id="KW-0190">Covalent protein-DNA linkage</keyword>
<keyword id="KW-0235">DNA replication</keyword>
<keyword id="KW-0238">DNA-binding</keyword>
<keyword id="KW-0255">Endonuclease</keyword>
<keyword id="KW-1078">G1/S host cell cycle checkpoint dysregulation by virus</keyword>
<keyword id="KW-1079">Host G2/M cell cycle arrest by virus</keyword>
<keyword id="KW-1048">Host nucleus</keyword>
<keyword id="KW-0945">Host-virus interaction</keyword>
<keyword id="KW-0378">Hydrolase</keyword>
<keyword id="KW-0479">Metal-binding</keyword>
<keyword id="KW-1121">Modulation of host cell cycle by virus</keyword>
<keyword id="KW-0540">Nuclease</keyword>
<keyword id="KW-0547">Nucleotide-binding</keyword>
<keyword id="KW-1185">Reference proteome</keyword>
<keyword id="KW-1162">Viral penetration into host cytoplasm</keyword>
<keyword id="KW-1173">Viral penetration via permeabilization of host membrane</keyword>
<keyword id="KW-1160">Virus entry into host cell</keyword>
<proteinExistence type="evidence at protein level"/>
<gene>
    <name type="primary">Rep68</name>
</gene>
<sequence length="536" mass="60754">MPGFYEIVIKVPSDLDGHLPGISDSFVNWVAEKEWELPPDSDMDLNLIEQAPLTVAEKLQRDFLTEWRRVSKAPEALFFVQFEKGESYFHMHVLVETTGVKSMVLGRFLSQIREKLIQRIYRGIEPTLPNWFAVTKTRNGAGGGNKVVDECYIPNYLLPKTQPELQWAWTNMEQYLSACLNLTERKRLVAQHLTHVSQTQEQNKENQNPNSDAPVIRSKTSARYMELVGWLVDKGITSEKQWIQEDQASYISFNAASNSRSQIKAALDNAGKIMSLTKTAPDYLVGQQPVEDISSNRIYKILELNGYDPQYAASVFLGWATKKFGKRNTIWLFGPATTGKTNIAEAIAHTVPFYGCVNWTNENFPFNDCVDKMVIWWEEGKMTAKVVESAKAILGGSKVRVDQKCKSSAQIDPTPVIVTSNTNMCAVIDGNSTTFEHQQPLQDRMFKFELTRRLDHDFGKVTKQEVKDFFRWAKDHVVEVEHEFYVKKGGAKKRPAPSDADISEPKRVRESVAQPSTSDAEASINYADRLARGHSL</sequence>
<comment type="function">
    <text evidence="7">Plays an essential role in the initiation of viral DNA synthesis. Binds specifically to an inverted terminal repeat element (ITR) on the 3' and 5' ends of the viral DNA, where it cleaves a site specifically to generate a priming site for initiation of the synthesis of a complementary strand. Also plays a role as transcriptional regulator, DNA helicase and as key factor in site-specific integration of the viral genome. Inhibits the host cell cycle G1/S and G2/M transitions. These arrests may provide essential cellular factors for viral DNA replication.</text>
</comment>
<comment type="catalytic activity">
    <reaction>
        <text>ATP + H2O = ADP + phosphate + H(+)</text>
        <dbReference type="Rhea" id="RHEA:13065"/>
        <dbReference type="ChEBI" id="CHEBI:15377"/>
        <dbReference type="ChEBI" id="CHEBI:15378"/>
        <dbReference type="ChEBI" id="CHEBI:30616"/>
        <dbReference type="ChEBI" id="CHEBI:43474"/>
        <dbReference type="ChEBI" id="CHEBI:456216"/>
        <dbReference type="EC" id="3.6.4.12"/>
    </reaction>
</comment>
<comment type="cofactor">
    <cofactor evidence="2">
        <name>a divalent metal cation</name>
        <dbReference type="ChEBI" id="CHEBI:60240"/>
    </cofactor>
</comment>
<comment type="subunit">
    <text evidence="4 5 6">Interacts with host TOPORS. Interacts with host KCTD5.</text>
</comment>
<comment type="interaction">
    <interactant intactId="EBI-7387242">
        <id>P03132</id>
    </interactant>
    <interactant intactId="EBI-1779322">
        <id>P03120</id>
        <label>E2</label>
    </interactant>
    <organismsDiffer>true</organismsDiffer>
    <experiments>2</experiments>
</comment>
<comment type="interaction">
    <interactant intactId="EBI-7387242">
        <id>P03132</id>
    </interactant>
    <interactant intactId="EBI-1056857">
        <id>Q9NXV2</id>
        <label>KCTD5</label>
    </interactant>
    <organismsDiffer>true</organismsDiffer>
    <experiments>3</experiments>
</comment>
<comment type="interaction">
    <interactant intactId="EBI-7387242">
        <id>P03132</id>
    </interactant>
    <interactant intactId="EBI-998260">
        <id>P53999</id>
        <label>SUB1</label>
    </interactant>
    <organismsDiffer>true</organismsDiffer>
    <experiments>3</experiments>
</comment>
<comment type="interaction">
    <interactant intactId="EBI-7387242">
        <id>P03132</id>
    </interactant>
    <interactant intactId="EBI-1996473">
        <id>Q9NS56</id>
        <label>TOPORS</label>
    </interactant>
    <organismsDiffer>true</organismsDiffer>
    <experiments>3</experiments>
</comment>
<comment type="subcellular location">
    <subcellularLocation>
        <location evidence="2">Host nucleus</location>
    </subcellularLocation>
</comment>
<feature type="chain" id="PRO_0000222474" description="Protein Rep68">
    <location>
        <begin position="1"/>
        <end position="536"/>
    </location>
</feature>
<feature type="domain" description="PV NS1-Nuc" evidence="2">
    <location>
        <begin position="1"/>
        <end position="199"/>
    </location>
</feature>
<feature type="domain" description="SF3 helicase" evidence="1">
    <location>
        <begin position="308"/>
        <end position="463"/>
    </location>
</feature>
<feature type="region of interest" description="Disordered" evidence="3">
    <location>
        <begin position="196"/>
        <end position="216"/>
    </location>
</feature>
<feature type="region of interest" description="Disordered" evidence="3">
    <location>
        <begin position="488"/>
        <end position="536"/>
    </location>
</feature>
<feature type="short sequence motif" description="RCR-2" evidence="2">
    <location>
        <begin position="90"/>
        <end position="92"/>
    </location>
</feature>
<feature type="short sequence motif" description="RCR-3" evidence="2">
    <location>
        <begin position="156"/>
        <end position="160"/>
    </location>
</feature>
<feature type="compositionally biased region" description="Polar residues" evidence="3">
    <location>
        <begin position="196"/>
        <end position="211"/>
    </location>
</feature>
<feature type="active site" description="For nuclease activity" evidence="2">
    <location>
        <position position="156"/>
    </location>
</feature>
<feature type="binding site" evidence="2">
    <location>
        <position position="83"/>
    </location>
    <ligand>
        <name>a divalent metal cation</name>
        <dbReference type="ChEBI" id="CHEBI:60240"/>
    </ligand>
</feature>
<feature type="binding site" evidence="2">
    <location>
        <position position="90"/>
    </location>
    <ligand>
        <name>a divalent metal cation</name>
        <dbReference type="ChEBI" id="CHEBI:60240"/>
    </ligand>
</feature>
<feature type="binding site" evidence="2">
    <location>
        <position position="92"/>
    </location>
    <ligand>
        <name>a divalent metal cation</name>
        <dbReference type="ChEBI" id="CHEBI:60240"/>
    </ligand>
</feature>
<feature type="binding site" evidence="1">
    <location>
        <begin position="334"/>
        <end position="341"/>
    </location>
    <ligand>
        <name>ATP</name>
        <dbReference type="ChEBI" id="CHEBI:30616"/>
    </ligand>
</feature>
<feature type="sequence conflict" description="In Ref. 2; AAC03774." evidence="8" ref="2">
    <original>G</original>
    <variation>E</variation>
    <location>
        <position position="17"/>
    </location>
</feature>
<feature type="strand" evidence="11">
    <location>
        <begin position="4"/>
        <end position="11"/>
    </location>
</feature>
<feature type="helix" evidence="11">
    <location>
        <begin position="15"/>
        <end position="18"/>
    </location>
</feature>
<feature type="helix" evidence="11">
    <location>
        <begin position="24"/>
        <end position="32"/>
    </location>
</feature>
<feature type="helix" evidence="11">
    <location>
        <begin position="45"/>
        <end position="47"/>
    </location>
</feature>
<feature type="helix" evidence="11">
    <location>
        <begin position="50"/>
        <end position="71"/>
    </location>
</feature>
<feature type="strand" evidence="11">
    <location>
        <begin position="78"/>
        <end position="84"/>
    </location>
</feature>
<feature type="strand" evidence="11">
    <location>
        <begin position="89"/>
        <end position="96"/>
    </location>
</feature>
<feature type="helix" evidence="11">
    <location>
        <begin position="102"/>
        <end position="104"/>
    </location>
</feature>
<feature type="helix" evidence="11">
    <location>
        <begin position="105"/>
        <end position="119"/>
    </location>
</feature>
<feature type="turn" evidence="12">
    <location>
        <begin position="120"/>
        <end position="123"/>
    </location>
</feature>
<feature type="strand" evidence="11">
    <location>
        <begin position="132"/>
        <end position="134"/>
    </location>
</feature>
<feature type="strand" evidence="12">
    <location>
        <begin position="136"/>
        <end position="140"/>
    </location>
</feature>
<feature type="helix" evidence="11">
    <location>
        <begin position="152"/>
        <end position="156"/>
    </location>
</feature>
<feature type="turn" evidence="11">
    <location>
        <begin position="157"/>
        <end position="159"/>
    </location>
</feature>
<feature type="turn" evidence="11">
    <location>
        <begin position="162"/>
        <end position="164"/>
    </location>
</feature>
<feature type="strand" evidence="11">
    <location>
        <begin position="165"/>
        <end position="170"/>
    </location>
</feature>
<feature type="helix" evidence="11">
    <location>
        <begin position="173"/>
        <end position="175"/>
    </location>
</feature>
<feature type="turn" evidence="11">
    <location>
        <begin position="176"/>
        <end position="180"/>
    </location>
</feature>
<feature type="helix" evidence="11">
    <location>
        <begin position="182"/>
        <end position="204"/>
    </location>
</feature>
<feature type="helix" evidence="10">
    <location>
        <begin position="225"/>
        <end position="234"/>
    </location>
</feature>
<feature type="helix" evidence="10">
    <location>
        <begin position="239"/>
        <end position="254"/>
    </location>
</feature>
<feature type="helix" evidence="10">
    <location>
        <begin position="260"/>
        <end position="277"/>
    </location>
</feature>
<feature type="helix" evidence="10">
    <location>
        <begin position="280"/>
        <end position="284"/>
    </location>
</feature>
<feature type="helix" evidence="10">
    <location>
        <begin position="293"/>
        <end position="295"/>
    </location>
</feature>
<feature type="helix" evidence="10">
    <location>
        <begin position="297"/>
        <end position="304"/>
    </location>
</feature>
<feature type="helix" evidence="10">
    <location>
        <begin position="309"/>
        <end position="320"/>
    </location>
</feature>
<feature type="turn" evidence="9">
    <location>
        <begin position="322"/>
        <end position="326"/>
    </location>
</feature>
<feature type="strand" evidence="10">
    <location>
        <begin position="329"/>
        <end position="333"/>
    </location>
</feature>
<feature type="helix" evidence="10">
    <location>
        <begin position="340"/>
        <end position="350"/>
    </location>
</feature>
<feature type="strand" evidence="10">
    <location>
        <begin position="354"/>
        <end position="356"/>
    </location>
</feature>
<feature type="turn" evidence="9">
    <location>
        <begin position="360"/>
        <end position="363"/>
    </location>
</feature>
<feature type="helix" evidence="10">
    <location>
        <begin position="367"/>
        <end position="369"/>
    </location>
</feature>
<feature type="strand" evidence="10">
    <location>
        <begin position="373"/>
        <end position="377"/>
    </location>
</feature>
<feature type="turn" evidence="10">
    <location>
        <begin position="384"/>
        <end position="386"/>
    </location>
</feature>
<feature type="helix" evidence="10">
    <location>
        <begin position="387"/>
        <end position="394"/>
    </location>
</feature>
<feature type="strand" evidence="9">
    <location>
        <begin position="399"/>
        <end position="401"/>
    </location>
</feature>
<feature type="turn" evidence="9">
    <location>
        <begin position="404"/>
        <end position="406"/>
    </location>
</feature>
<feature type="strand" evidence="9">
    <location>
        <begin position="409"/>
        <end position="411"/>
    </location>
</feature>
<feature type="strand" evidence="10">
    <location>
        <begin position="416"/>
        <end position="422"/>
    </location>
</feature>
<feature type="strand" evidence="10">
    <location>
        <begin position="427"/>
        <end position="429"/>
    </location>
</feature>
<feature type="strand" evidence="10">
    <location>
        <begin position="432"/>
        <end position="434"/>
    </location>
</feature>
<feature type="helix" evidence="10">
    <location>
        <begin position="438"/>
        <end position="442"/>
    </location>
</feature>
<feature type="strand" evidence="10">
    <location>
        <begin position="445"/>
        <end position="449"/>
    </location>
</feature>
<feature type="helix" evidence="10">
    <location>
        <begin position="463"/>
        <end position="475"/>
    </location>
</feature>
<feature type="strand" evidence="9">
    <location>
        <begin position="483"/>
        <end position="485"/>
    </location>
</feature>